<protein>
    <recommendedName>
        <fullName evidence="1">Glycine cleavage system H protein</fullName>
    </recommendedName>
</protein>
<organism>
    <name type="scientific">Synechococcus sp. (strain WH7803)</name>
    <dbReference type="NCBI Taxonomy" id="32051"/>
    <lineage>
        <taxon>Bacteria</taxon>
        <taxon>Bacillati</taxon>
        <taxon>Cyanobacteriota</taxon>
        <taxon>Cyanophyceae</taxon>
        <taxon>Synechococcales</taxon>
        <taxon>Synechococcaceae</taxon>
        <taxon>Synechococcus</taxon>
    </lineage>
</organism>
<dbReference type="EMBL" id="CT971583">
    <property type="protein sequence ID" value="CAK24839.1"/>
    <property type="molecule type" value="Genomic_DNA"/>
</dbReference>
<dbReference type="SMR" id="A5GPH4"/>
<dbReference type="STRING" id="32051.SynWH7803_2413"/>
<dbReference type="KEGG" id="syx:SynWH7803_2413"/>
<dbReference type="eggNOG" id="COG0509">
    <property type="taxonomic scope" value="Bacteria"/>
</dbReference>
<dbReference type="HOGENOM" id="CLU_097408_2_0_3"/>
<dbReference type="OrthoDB" id="9796712at2"/>
<dbReference type="Proteomes" id="UP000001566">
    <property type="component" value="Chromosome"/>
</dbReference>
<dbReference type="GO" id="GO:0005829">
    <property type="term" value="C:cytosol"/>
    <property type="evidence" value="ECO:0007669"/>
    <property type="project" value="TreeGrafter"/>
</dbReference>
<dbReference type="GO" id="GO:0005960">
    <property type="term" value="C:glycine cleavage complex"/>
    <property type="evidence" value="ECO:0007669"/>
    <property type="project" value="InterPro"/>
</dbReference>
<dbReference type="GO" id="GO:0019464">
    <property type="term" value="P:glycine decarboxylation via glycine cleavage system"/>
    <property type="evidence" value="ECO:0007669"/>
    <property type="project" value="UniProtKB-UniRule"/>
</dbReference>
<dbReference type="CDD" id="cd06848">
    <property type="entry name" value="GCS_H"/>
    <property type="match status" value="1"/>
</dbReference>
<dbReference type="Gene3D" id="2.40.50.100">
    <property type="match status" value="1"/>
</dbReference>
<dbReference type="HAMAP" id="MF_00272">
    <property type="entry name" value="GcvH"/>
    <property type="match status" value="1"/>
</dbReference>
<dbReference type="InterPro" id="IPR003016">
    <property type="entry name" value="2-oxoA_DH_lipoyl-BS"/>
</dbReference>
<dbReference type="InterPro" id="IPR000089">
    <property type="entry name" value="Biotin_lipoyl"/>
</dbReference>
<dbReference type="InterPro" id="IPR002930">
    <property type="entry name" value="GCV_H"/>
</dbReference>
<dbReference type="InterPro" id="IPR033753">
    <property type="entry name" value="GCV_H/Fam206"/>
</dbReference>
<dbReference type="InterPro" id="IPR017453">
    <property type="entry name" value="GCV_H_sub"/>
</dbReference>
<dbReference type="InterPro" id="IPR011053">
    <property type="entry name" value="Single_hybrid_motif"/>
</dbReference>
<dbReference type="NCBIfam" id="TIGR00527">
    <property type="entry name" value="gcvH"/>
    <property type="match status" value="1"/>
</dbReference>
<dbReference type="NCBIfam" id="NF002270">
    <property type="entry name" value="PRK01202.1"/>
    <property type="match status" value="1"/>
</dbReference>
<dbReference type="PANTHER" id="PTHR11715">
    <property type="entry name" value="GLYCINE CLEAVAGE SYSTEM H PROTEIN"/>
    <property type="match status" value="1"/>
</dbReference>
<dbReference type="PANTHER" id="PTHR11715:SF3">
    <property type="entry name" value="GLYCINE CLEAVAGE SYSTEM H PROTEIN-RELATED"/>
    <property type="match status" value="1"/>
</dbReference>
<dbReference type="Pfam" id="PF01597">
    <property type="entry name" value="GCV_H"/>
    <property type="match status" value="1"/>
</dbReference>
<dbReference type="SUPFAM" id="SSF51230">
    <property type="entry name" value="Single hybrid motif"/>
    <property type="match status" value="1"/>
</dbReference>
<dbReference type="PROSITE" id="PS50968">
    <property type="entry name" value="BIOTINYL_LIPOYL"/>
    <property type="match status" value="1"/>
</dbReference>
<dbReference type="PROSITE" id="PS00189">
    <property type="entry name" value="LIPOYL"/>
    <property type="match status" value="1"/>
</dbReference>
<evidence type="ECO:0000255" key="1">
    <source>
        <dbReference type="HAMAP-Rule" id="MF_00272"/>
    </source>
</evidence>
<evidence type="ECO:0000255" key="2">
    <source>
        <dbReference type="PROSITE-ProRule" id="PRU01066"/>
    </source>
</evidence>
<keyword id="KW-0450">Lipoyl</keyword>
<keyword id="KW-1185">Reference proteome</keyword>
<accession>A5GPH4</accession>
<reference key="1">
    <citation type="submission" date="2006-05" db="EMBL/GenBank/DDBJ databases">
        <authorList>
            <consortium name="Genoscope"/>
        </authorList>
    </citation>
    <scope>NUCLEOTIDE SEQUENCE [LARGE SCALE GENOMIC DNA]</scope>
    <source>
        <strain>WH7803</strain>
    </source>
</reference>
<feature type="chain" id="PRO_0000302454" description="Glycine cleavage system H protein">
    <location>
        <begin position="1"/>
        <end position="129"/>
    </location>
</feature>
<feature type="domain" description="Lipoyl-binding" evidence="2">
    <location>
        <begin position="24"/>
        <end position="106"/>
    </location>
</feature>
<feature type="modified residue" description="N6-lipoyllysine" evidence="1">
    <location>
        <position position="65"/>
    </location>
</feature>
<proteinExistence type="inferred from homology"/>
<comment type="function">
    <text evidence="1">The glycine cleavage system catalyzes the degradation of glycine. The H protein shuttles the methylamine group of glycine from the P protein to the T protein.</text>
</comment>
<comment type="cofactor">
    <cofactor evidence="1">
        <name>(R)-lipoate</name>
        <dbReference type="ChEBI" id="CHEBI:83088"/>
    </cofactor>
    <text evidence="1">Binds 1 lipoyl cofactor covalently.</text>
</comment>
<comment type="subunit">
    <text evidence="1">The glycine cleavage system is composed of four proteins: P, T, L and H.</text>
</comment>
<comment type="similarity">
    <text evidence="1">Belongs to the GcvH family.</text>
</comment>
<gene>
    <name evidence="1" type="primary">gcvH</name>
    <name type="ordered locus">SynWH7803_2413</name>
</gene>
<name>GCSH_SYNPW</name>
<sequence>MAFDFPDSYRYADSHEYAWQDAAAVRIGLSAYAVDQLGDIVFVDLPEVGAELNRGSSFGTVESVKAVEEMYAPLSGVVLQRNEALLANPEELQNDPHGEGWLLVIQPGDPSQMDQLMDAATYAAKVAAT</sequence>